<proteinExistence type="inferred from homology"/>
<organism>
    <name type="scientific">Yersinia pseudotuberculosis serotype I (strain IP32953)</name>
    <dbReference type="NCBI Taxonomy" id="273123"/>
    <lineage>
        <taxon>Bacteria</taxon>
        <taxon>Pseudomonadati</taxon>
        <taxon>Pseudomonadota</taxon>
        <taxon>Gammaproteobacteria</taxon>
        <taxon>Enterobacterales</taxon>
        <taxon>Yersiniaceae</taxon>
        <taxon>Yersinia</taxon>
    </lineage>
</organism>
<sequence length="217" mass="23360">MNQTLLSDFGTPVERVERAIDALRNGRGVMVLDDESRENEGDMVFAAEAMTLEQMALTIRHGSGIVCLCITDERRQQLDLPMMVTHNSSQFQTAFTVTIEAAEGVTTGVSAADRLTTIRKAIADNAKPADLNRPGHVFPLRGQPGGVLSRRGHTEASIDLATLAGYKPAGVLCELTNDDGSMAHAPEVIAFAKLHDMPVVTIDDLAAYLQSRAKKAS</sequence>
<accession>Q665V6</accession>
<comment type="function">
    <text evidence="1">Catalyzes the conversion of D-ribulose 5-phosphate to formate and 3,4-dihydroxy-2-butanone 4-phosphate.</text>
</comment>
<comment type="catalytic activity">
    <reaction evidence="1">
        <text>D-ribulose 5-phosphate = (2S)-2-hydroxy-3-oxobutyl phosphate + formate + H(+)</text>
        <dbReference type="Rhea" id="RHEA:18457"/>
        <dbReference type="ChEBI" id="CHEBI:15378"/>
        <dbReference type="ChEBI" id="CHEBI:15740"/>
        <dbReference type="ChEBI" id="CHEBI:58121"/>
        <dbReference type="ChEBI" id="CHEBI:58830"/>
        <dbReference type="EC" id="4.1.99.12"/>
    </reaction>
</comment>
<comment type="cofactor">
    <cofactor evidence="1">
        <name>Mg(2+)</name>
        <dbReference type="ChEBI" id="CHEBI:18420"/>
    </cofactor>
    <cofactor evidence="1">
        <name>Mn(2+)</name>
        <dbReference type="ChEBI" id="CHEBI:29035"/>
    </cofactor>
    <text evidence="1">Binds 2 divalent metal cations per subunit. Magnesium or manganese.</text>
</comment>
<comment type="pathway">
    <text evidence="1">Cofactor biosynthesis; riboflavin biosynthesis; 2-hydroxy-3-oxobutyl phosphate from D-ribulose 5-phosphate: step 1/1.</text>
</comment>
<comment type="subunit">
    <text evidence="1">Homodimer.</text>
</comment>
<comment type="similarity">
    <text evidence="1">Belongs to the DHBP synthase family.</text>
</comment>
<dbReference type="EC" id="4.1.99.12" evidence="1"/>
<dbReference type="EMBL" id="BX936398">
    <property type="protein sequence ID" value="CAH22642.1"/>
    <property type="molecule type" value="Genomic_DNA"/>
</dbReference>
<dbReference type="RefSeq" id="WP_002212190.1">
    <property type="nucleotide sequence ID" value="NZ_CP009712.1"/>
</dbReference>
<dbReference type="SMR" id="Q665V6"/>
<dbReference type="GeneID" id="57973967"/>
<dbReference type="KEGG" id="ypo:BZ17_3204"/>
<dbReference type="KEGG" id="yps:YPTB3404"/>
<dbReference type="PATRIC" id="fig|273123.14.peg.3355"/>
<dbReference type="UniPathway" id="UPA00275">
    <property type="reaction ID" value="UER00399"/>
</dbReference>
<dbReference type="Proteomes" id="UP000001011">
    <property type="component" value="Chromosome"/>
</dbReference>
<dbReference type="GO" id="GO:0005829">
    <property type="term" value="C:cytosol"/>
    <property type="evidence" value="ECO:0007669"/>
    <property type="project" value="TreeGrafter"/>
</dbReference>
<dbReference type="GO" id="GO:0008686">
    <property type="term" value="F:3,4-dihydroxy-2-butanone-4-phosphate synthase activity"/>
    <property type="evidence" value="ECO:0007669"/>
    <property type="project" value="UniProtKB-UniRule"/>
</dbReference>
<dbReference type="GO" id="GO:0000287">
    <property type="term" value="F:magnesium ion binding"/>
    <property type="evidence" value="ECO:0007669"/>
    <property type="project" value="UniProtKB-UniRule"/>
</dbReference>
<dbReference type="GO" id="GO:0030145">
    <property type="term" value="F:manganese ion binding"/>
    <property type="evidence" value="ECO:0007669"/>
    <property type="project" value="UniProtKB-UniRule"/>
</dbReference>
<dbReference type="GO" id="GO:0009231">
    <property type="term" value="P:riboflavin biosynthetic process"/>
    <property type="evidence" value="ECO:0007669"/>
    <property type="project" value="UniProtKB-UniRule"/>
</dbReference>
<dbReference type="FunFam" id="3.90.870.10:FF:000002">
    <property type="entry name" value="3,4-dihydroxy-2-butanone 4-phosphate synthase"/>
    <property type="match status" value="1"/>
</dbReference>
<dbReference type="Gene3D" id="3.90.870.10">
    <property type="entry name" value="DHBP synthase"/>
    <property type="match status" value="1"/>
</dbReference>
<dbReference type="HAMAP" id="MF_00180">
    <property type="entry name" value="RibB"/>
    <property type="match status" value="1"/>
</dbReference>
<dbReference type="InterPro" id="IPR017945">
    <property type="entry name" value="DHBP_synth_RibB-like_a/b_dom"/>
</dbReference>
<dbReference type="InterPro" id="IPR000422">
    <property type="entry name" value="DHBP_synthase_RibB"/>
</dbReference>
<dbReference type="NCBIfam" id="TIGR00506">
    <property type="entry name" value="ribB"/>
    <property type="match status" value="1"/>
</dbReference>
<dbReference type="PANTHER" id="PTHR21327:SF38">
    <property type="entry name" value="3,4-DIHYDROXY-2-BUTANONE 4-PHOSPHATE SYNTHASE"/>
    <property type="match status" value="1"/>
</dbReference>
<dbReference type="PANTHER" id="PTHR21327">
    <property type="entry name" value="GTP CYCLOHYDROLASE II-RELATED"/>
    <property type="match status" value="1"/>
</dbReference>
<dbReference type="Pfam" id="PF00926">
    <property type="entry name" value="DHBP_synthase"/>
    <property type="match status" value="1"/>
</dbReference>
<dbReference type="SUPFAM" id="SSF55821">
    <property type="entry name" value="YrdC/RibB"/>
    <property type="match status" value="1"/>
</dbReference>
<protein>
    <recommendedName>
        <fullName evidence="1">3,4-dihydroxy-2-butanone 4-phosphate synthase</fullName>
        <shortName evidence="1">DHBP synthase</shortName>
        <ecNumber evidence="1">4.1.99.12</ecNumber>
    </recommendedName>
</protein>
<keyword id="KW-0456">Lyase</keyword>
<keyword id="KW-0460">Magnesium</keyword>
<keyword id="KW-0464">Manganese</keyword>
<keyword id="KW-0479">Metal-binding</keyword>
<keyword id="KW-0686">Riboflavin biosynthesis</keyword>
<feature type="chain" id="PRO_1000040643" description="3,4-dihydroxy-2-butanone 4-phosphate synthase">
    <location>
        <begin position="1"/>
        <end position="217"/>
    </location>
</feature>
<feature type="binding site" evidence="1">
    <location>
        <begin position="37"/>
        <end position="38"/>
    </location>
    <ligand>
        <name>D-ribulose 5-phosphate</name>
        <dbReference type="ChEBI" id="CHEBI:58121"/>
    </ligand>
</feature>
<feature type="binding site" evidence="1">
    <location>
        <position position="38"/>
    </location>
    <ligand>
        <name>Mg(2+)</name>
        <dbReference type="ChEBI" id="CHEBI:18420"/>
        <label>1</label>
    </ligand>
</feature>
<feature type="binding site" evidence="1">
    <location>
        <position position="38"/>
    </location>
    <ligand>
        <name>Mg(2+)</name>
        <dbReference type="ChEBI" id="CHEBI:18420"/>
        <label>2</label>
    </ligand>
</feature>
<feature type="binding site" evidence="1">
    <location>
        <position position="42"/>
    </location>
    <ligand>
        <name>D-ribulose 5-phosphate</name>
        <dbReference type="ChEBI" id="CHEBI:58121"/>
    </ligand>
</feature>
<feature type="binding site" evidence="1">
    <location>
        <begin position="150"/>
        <end position="154"/>
    </location>
    <ligand>
        <name>D-ribulose 5-phosphate</name>
        <dbReference type="ChEBI" id="CHEBI:58121"/>
    </ligand>
</feature>
<feature type="binding site" evidence="1">
    <location>
        <position position="153"/>
    </location>
    <ligand>
        <name>Mg(2+)</name>
        <dbReference type="ChEBI" id="CHEBI:18420"/>
        <label>2</label>
    </ligand>
</feature>
<feature type="binding site" evidence="1">
    <location>
        <position position="174"/>
    </location>
    <ligand>
        <name>D-ribulose 5-phosphate</name>
        <dbReference type="ChEBI" id="CHEBI:58121"/>
    </ligand>
</feature>
<feature type="site" description="Essential for catalytic activity" evidence="1">
    <location>
        <position position="136"/>
    </location>
</feature>
<feature type="site" description="Essential for catalytic activity" evidence="1">
    <location>
        <position position="174"/>
    </location>
</feature>
<name>RIBB_YERPS</name>
<evidence type="ECO:0000255" key="1">
    <source>
        <dbReference type="HAMAP-Rule" id="MF_00180"/>
    </source>
</evidence>
<gene>
    <name evidence="1" type="primary">ribB</name>
    <name type="ordered locus">YPTB3404</name>
</gene>
<reference key="1">
    <citation type="journal article" date="2004" name="Proc. Natl. Acad. Sci. U.S.A.">
        <title>Insights into the evolution of Yersinia pestis through whole-genome comparison with Yersinia pseudotuberculosis.</title>
        <authorList>
            <person name="Chain P.S.G."/>
            <person name="Carniel E."/>
            <person name="Larimer F.W."/>
            <person name="Lamerdin J."/>
            <person name="Stoutland P.O."/>
            <person name="Regala W.M."/>
            <person name="Georgescu A.M."/>
            <person name="Vergez L.M."/>
            <person name="Land M.L."/>
            <person name="Motin V.L."/>
            <person name="Brubaker R.R."/>
            <person name="Fowler J."/>
            <person name="Hinnebusch J."/>
            <person name="Marceau M."/>
            <person name="Medigue C."/>
            <person name="Simonet M."/>
            <person name="Chenal-Francisque V."/>
            <person name="Souza B."/>
            <person name="Dacheux D."/>
            <person name="Elliott J.M."/>
            <person name="Derbise A."/>
            <person name="Hauser L.J."/>
            <person name="Garcia E."/>
        </authorList>
    </citation>
    <scope>NUCLEOTIDE SEQUENCE [LARGE SCALE GENOMIC DNA]</scope>
    <source>
        <strain>IP32953</strain>
    </source>
</reference>